<protein>
    <recommendedName>
        <fullName>Protein kish</fullName>
    </recommendedName>
    <alternativeName>
        <fullName>Transmembrane protein 167</fullName>
    </alternativeName>
</protein>
<organism>
    <name type="scientific">Dictyostelium discoideum</name>
    <name type="common">Social amoeba</name>
    <dbReference type="NCBI Taxonomy" id="44689"/>
    <lineage>
        <taxon>Eukaryota</taxon>
        <taxon>Amoebozoa</taxon>
        <taxon>Evosea</taxon>
        <taxon>Eumycetozoa</taxon>
        <taxon>Dictyostelia</taxon>
        <taxon>Dictyosteliales</taxon>
        <taxon>Dictyosteliaceae</taxon>
        <taxon>Dictyostelium</taxon>
    </lineage>
</organism>
<keyword id="KW-0333">Golgi apparatus</keyword>
<keyword id="KW-0472">Membrane</keyword>
<keyword id="KW-1185">Reference proteome</keyword>
<keyword id="KW-0732">Signal</keyword>
<keyword id="KW-0812">Transmembrane</keyword>
<keyword id="KW-1133">Transmembrane helix</keyword>
<accession>Q54HH9</accession>
<feature type="signal peptide" evidence="2">
    <location>
        <begin position="1"/>
        <end position="26"/>
    </location>
</feature>
<feature type="chain" id="PRO_0000328186" description="Protein kish">
    <location>
        <begin position="27"/>
        <end position="72"/>
    </location>
</feature>
<feature type="topological domain" description="Extracellular" evidence="2">
    <location>
        <begin position="27"/>
        <end position="47"/>
    </location>
</feature>
<feature type="transmembrane region" description="Helical" evidence="2">
    <location>
        <begin position="48"/>
        <end position="68"/>
    </location>
</feature>
<feature type="topological domain" description="Cytoplasmic" evidence="2">
    <location>
        <begin position="69"/>
        <end position="72"/>
    </location>
</feature>
<name>KISH_DICDI</name>
<sequence length="72" mass="8141">MVAIFNFQSLLVVILLFICTCTYIRGSYPSLLEVRDKHSFSGLPRKAAIIGERLSPWVSACCLIMGLWTLYN</sequence>
<gene>
    <name type="primary">tmem167</name>
    <name type="ORF">DDB_G0289451</name>
</gene>
<proteinExistence type="inferred from homology"/>
<comment type="function">
    <text evidence="1">Involved in the early part of the secretory pathway.</text>
</comment>
<comment type="subcellular location">
    <subcellularLocation>
        <location evidence="1">Golgi apparatus membrane</location>
        <topology evidence="1">Single-pass type I membrane protein</topology>
    </subcellularLocation>
</comment>
<comment type="similarity">
    <text evidence="3">Belongs to the KISH family.</text>
</comment>
<reference key="1">
    <citation type="journal article" date="2005" name="Nature">
        <title>The genome of the social amoeba Dictyostelium discoideum.</title>
        <authorList>
            <person name="Eichinger L."/>
            <person name="Pachebat J.A."/>
            <person name="Gloeckner G."/>
            <person name="Rajandream M.A."/>
            <person name="Sucgang R."/>
            <person name="Berriman M."/>
            <person name="Song J."/>
            <person name="Olsen R."/>
            <person name="Szafranski K."/>
            <person name="Xu Q."/>
            <person name="Tunggal B."/>
            <person name="Kummerfeld S."/>
            <person name="Madera M."/>
            <person name="Konfortov B.A."/>
            <person name="Rivero F."/>
            <person name="Bankier A.T."/>
            <person name="Lehmann R."/>
            <person name="Hamlin N."/>
            <person name="Davies R."/>
            <person name="Gaudet P."/>
            <person name="Fey P."/>
            <person name="Pilcher K."/>
            <person name="Chen G."/>
            <person name="Saunders D."/>
            <person name="Sodergren E.J."/>
            <person name="Davis P."/>
            <person name="Kerhornou A."/>
            <person name="Nie X."/>
            <person name="Hall N."/>
            <person name="Anjard C."/>
            <person name="Hemphill L."/>
            <person name="Bason N."/>
            <person name="Farbrother P."/>
            <person name="Desany B."/>
            <person name="Just E."/>
            <person name="Morio T."/>
            <person name="Rost R."/>
            <person name="Churcher C.M."/>
            <person name="Cooper J."/>
            <person name="Haydock S."/>
            <person name="van Driessche N."/>
            <person name="Cronin A."/>
            <person name="Goodhead I."/>
            <person name="Muzny D.M."/>
            <person name="Mourier T."/>
            <person name="Pain A."/>
            <person name="Lu M."/>
            <person name="Harper D."/>
            <person name="Lindsay R."/>
            <person name="Hauser H."/>
            <person name="James K.D."/>
            <person name="Quiles M."/>
            <person name="Madan Babu M."/>
            <person name="Saito T."/>
            <person name="Buchrieser C."/>
            <person name="Wardroper A."/>
            <person name="Felder M."/>
            <person name="Thangavelu M."/>
            <person name="Johnson D."/>
            <person name="Knights A."/>
            <person name="Loulseged H."/>
            <person name="Mungall K.L."/>
            <person name="Oliver K."/>
            <person name="Price C."/>
            <person name="Quail M.A."/>
            <person name="Urushihara H."/>
            <person name="Hernandez J."/>
            <person name="Rabbinowitsch E."/>
            <person name="Steffen D."/>
            <person name="Sanders M."/>
            <person name="Ma J."/>
            <person name="Kohara Y."/>
            <person name="Sharp S."/>
            <person name="Simmonds M.N."/>
            <person name="Spiegler S."/>
            <person name="Tivey A."/>
            <person name="Sugano S."/>
            <person name="White B."/>
            <person name="Walker D."/>
            <person name="Woodward J.R."/>
            <person name="Winckler T."/>
            <person name="Tanaka Y."/>
            <person name="Shaulsky G."/>
            <person name="Schleicher M."/>
            <person name="Weinstock G.M."/>
            <person name="Rosenthal A."/>
            <person name="Cox E.C."/>
            <person name="Chisholm R.L."/>
            <person name="Gibbs R.A."/>
            <person name="Loomis W.F."/>
            <person name="Platzer M."/>
            <person name="Kay R.R."/>
            <person name="Williams J.G."/>
            <person name="Dear P.H."/>
            <person name="Noegel A.A."/>
            <person name="Barrell B.G."/>
            <person name="Kuspa A."/>
        </authorList>
    </citation>
    <scope>NUCLEOTIDE SEQUENCE [LARGE SCALE GENOMIC DNA]</scope>
    <source>
        <strain>AX4</strain>
    </source>
</reference>
<dbReference type="EMBL" id="AAFI02000141">
    <property type="protein sequence ID" value="EAL62705.1"/>
    <property type="molecule type" value="Genomic_DNA"/>
</dbReference>
<dbReference type="RefSeq" id="XP_636206.1">
    <property type="nucleotide sequence ID" value="XM_631114.1"/>
</dbReference>
<dbReference type="FunCoup" id="Q54HH9">
    <property type="interactions" value="37"/>
</dbReference>
<dbReference type="STRING" id="44689.Q54HH9"/>
<dbReference type="PaxDb" id="44689-DDB0266477"/>
<dbReference type="EnsemblProtists" id="EAL62705">
    <property type="protein sequence ID" value="EAL62705"/>
    <property type="gene ID" value="DDB_G0289451"/>
</dbReference>
<dbReference type="GeneID" id="8627144"/>
<dbReference type="KEGG" id="ddi:DDB_G0289451"/>
<dbReference type="dictyBase" id="DDB_G0289451">
    <property type="gene designation" value="tmem167"/>
</dbReference>
<dbReference type="VEuPathDB" id="AmoebaDB:DDB_G0289451"/>
<dbReference type="eggNOG" id="KOG3808">
    <property type="taxonomic scope" value="Eukaryota"/>
</dbReference>
<dbReference type="HOGENOM" id="CLU_152663_1_0_1"/>
<dbReference type="InParanoid" id="Q54HH9"/>
<dbReference type="OMA" id="KVGFQGT"/>
<dbReference type="PhylomeDB" id="Q54HH9"/>
<dbReference type="PRO" id="PR:Q54HH9"/>
<dbReference type="Proteomes" id="UP000002195">
    <property type="component" value="Chromosome 5"/>
</dbReference>
<dbReference type="GO" id="GO:0000139">
    <property type="term" value="C:Golgi membrane"/>
    <property type="evidence" value="ECO:0007669"/>
    <property type="project" value="UniProtKB-SubCell"/>
</dbReference>
<dbReference type="GO" id="GO:0046907">
    <property type="term" value="P:intracellular transport"/>
    <property type="evidence" value="ECO:0000318"/>
    <property type="project" value="GO_Central"/>
</dbReference>
<dbReference type="GO" id="GO:0009306">
    <property type="term" value="P:protein secretion"/>
    <property type="evidence" value="ECO:0000318"/>
    <property type="project" value="GO_Central"/>
</dbReference>
<dbReference type="InterPro" id="IPR051523">
    <property type="entry name" value="KISH_domain"/>
</dbReference>
<dbReference type="InterPro" id="IPR009653">
    <property type="entry name" value="Ksh1"/>
</dbReference>
<dbReference type="PANTHER" id="PTHR13229">
    <property type="entry name" value="PROTEIN KISH-A"/>
    <property type="match status" value="1"/>
</dbReference>
<dbReference type="Pfam" id="PF06842">
    <property type="entry name" value="DUF1242"/>
    <property type="match status" value="1"/>
</dbReference>
<evidence type="ECO:0000250" key="1"/>
<evidence type="ECO:0000255" key="2"/>
<evidence type="ECO:0000305" key="3"/>